<accession>P23881</accession>
<accession>A2AW46</accession>
<accession>O88710</accession>
<accession>Q9CTZ8</accession>
<accession>Q9DCZ5</accession>
<dbReference type="EMBL" id="D00926">
    <property type="protein sequence ID" value="BAA28177.1"/>
    <property type="status" value="ALT_SEQ"/>
    <property type="molecule type" value="mRNA"/>
</dbReference>
<dbReference type="EMBL" id="AJ223472">
    <property type="protein sequence ID" value="CAA11392.1"/>
    <property type="molecule type" value="mRNA"/>
</dbReference>
<dbReference type="EMBL" id="AK002319">
    <property type="protein sequence ID" value="BAB22010.1"/>
    <property type="molecule type" value="mRNA"/>
</dbReference>
<dbReference type="EMBL" id="AK007437">
    <property type="protein sequence ID" value="BAB25037.1"/>
    <property type="molecule type" value="mRNA"/>
</dbReference>
<dbReference type="EMBL" id="AK019024">
    <property type="protein sequence ID" value="BAB31514.2"/>
    <property type="status" value="ALT_SEQ"/>
    <property type="molecule type" value="mRNA"/>
</dbReference>
<dbReference type="EMBL" id="AL935264">
    <property type="status" value="NOT_ANNOTATED_CDS"/>
    <property type="molecule type" value="Genomic_DNA"/>
</dbReference>
<dbReference type="EMBL" id="BC010807">
    <property type="protein sequence ID" value="AAH10807.1"/>
    <property type="molecule type" value="mRNA"/>
</dbReference>
<dbReference type="CCDS" id="CCDS18803.1"/>
<dbReference type="RefSeq" id="NP_035672.1">
    <property type="nucleotide sequence ID" value="NM_011542.2"/>
</dbReference>
<dbReference type="PDB" id="1WJT">
    <property type="method" value="NMR"/>
    <property type="chains" value="A=1-90"/>
</dbReference>
<dbReference type="PDBsum" id="1WJT"/>
<dbReference type="BMRB" id="P23881"/>
<dbReference type="SMR" id="P23881"/>
<dbReference type="BioGRID" id="203997">
    <property type="interactions" value="3"/>
</dbReference>
<dbReference type="FunCoup" id="P23881">
    <property type="interactions" value="907"/>
</dbReference>
<dbReference type="STRING" id="10090.ENSMUSP00000099592"/>
<dbReference type="iPTMnet" id="P23881"/>
<dbReference type="PhosphoSitePlus" id="P23881"/>
<dbReference type="PaxDb" id="10090-ENSMUSP00000099592"/>
<dbReference type="PeptideAtlas" id="P23881"/>
<dbReference type="ProteomicsDB" id="254678"/>
<dbReference type="Pumba" id="P23881"/>
<dbReference type="Antibodypedia" id="8084">
    <property type="antibodies" value="200 antibodies from 23 providers"/>
</dbReference>
<dbReference type="DNASU" id="21401"/>
<dbReference type="Ensembl" id="ENSMUST00000102533.11">
    <property type="protein sequence ID" value="ENSMUSP00000099592.5"/>
    <property type="gene ID" value="ENSMUSG00000001604.15"/>
</dbReference>
<dbReference type="GeneID" id="21401"/>
<dbReference type="KEGG" id="mmu:21401"/>
<dbReference type="UCSC" id="uc008vhv.2">
    <property type="organism name" value="mouse"/>
</dbReference>
<dbReference type="AGR" id="MGI:1196908"/>
<dbReference type="CTD" id="6920"/>
<dbReference type="MGI" id="MGI:1196908">
    <property type="gene designation" value="Tcea3"/>
</dbReference>
<dbReference type="VEuPathDB" id="HostDB:ENSMUSG00000001604"/>
<dbReference type="eggNOG" id="KOG1105">
    <property type="taxonomic scope" value="Eukaryota"/>
</dbReference>
<dbReference type="GeneTree" id="ENSGT00940000157034"/>
<dbReference type="HOGENOM" id="CLU_037637_2_0_1"/>
<dbReference type="InParanoid" id="P23881"/>
<dbReference type="OMA" id="FQKTDMK"/>
<dbReference type="OrthoDB" id="44867at2759"/>
<dbReference type="PhylomeDB" id="P23881"/>
<dbReference type="TreeFam" id="TF314970"/>
<dbReference type="BioGRID-ORCS" id="21401">
    <property type="hits" value="3 hits in 81 CRISPR screens"/>
</dbReference>
<dbReference type="ChiTaRS" id="Tcea3">
    <property type="organism name" value="mouse"/>
</dbReference>
<dbReference type="EvolutionaryTrace" id="P23881"/>
<dbReference type="PRO" id="PR:P23881"/>
<dbReference type="Proteomes" id="UP000000589">
    <property type="component" value="Chromosome 4"/>
</dbReference>
<dbReference type="RNAct" id="P23881">
    <property type="molecule type" value="protein"/>
</dbReference>
<dbReference type="Bgee" id="ENSMUSG00000001604">
    <property type="expression patterns" value="Expressed in hindlimb stylopod muscle and 163 other cell types or tissues"/>
</dbReference>
<dbReference type="ExpressionAtlas" id="P23881">
    <property type="expression patterns" value="baseline and differential"/>
</dbReference>
<dbReference type="GO" id="GO:0005634">
    <property type="term" value="C:nucleus"/>
    <property type="evidence" value="ECO:0000314"/>
    <property type="project" value="MGI"/>
</dbReference>
<dbReference type="GO" id="GO:0003677">
    <property type="term" value="F:DNA binding"/>
    <property type="evidence" value="ECO:0007669"/>
    <property type="project" value="UniProtKB-KW"/>
</dbReference>
<dbReference type="GO" id="GO:0008270">
    <property type="term" value="F:zinc ion binding"/>
    <property type="evidence" value="ECO:0007669"/>
    <property type="project" value="UniProtKB-KW"/>
</dbReference>
<dbReference type="GO" id="GO:0006368">
    <property type="term" value="P:transcription elongation by RNA polymerase II"/>
    <property type="evidence" value="ECO:0007669"/>
    <property type="project" value="InterPro"/>
</dbReference>
<dbReference type="CDD" id="cd00183">
    <property type="entry name" value="TFIIS_I"/>
    <property type="match status" value="1"/>
</dbReference>
<dbReference type="CDD" id="cd13749">
    <property type="entry name" value="Zn-ribbon_TFIIS"/>
    <property type="match status" value="1"/>
</dbReference>
<dbReference type="FunFam" id="2.20.25.10:FF:000001">
    <property type="entry name" value="Probable Transcription elongation factor S-II"/>
    <property type="match status" value="1"/>
</dbReference>
<dbReference type="FunFam" id="1.20.930.10:FF:000020">
    <property type="entry name" value="Transcription elongation factor A (SII), 3"/>
    <property type="match status" value="1"/>
</dbReference>
<dbReference type="FunFam" id="1.10.472.30:FF:000008">
    <property type="entry name" value="transcription elongation factor S-II"/>
    <property type="match status" value="1"/>
</dbReference>
<dbReference type="Gene3D" id="2.20.25.10">
    <property type="match status" value="1"/>
</dbReference>
<dbReference type="Gene3D" id="1.20.930.10">
    <property type="entry name" value="Conserved domain common to transcription factors TFIIS, elongin A, CRSP70"/>
    <property type="match status" value="1"/>
</dbReference>
<dbReference type="Gene3D" id="1.10.472.30">
    <property type="entry name" value="Transcription elongation factor S-II, central domain"/>
    <property type="match status" value="1"/>
</dbReference>
<dbReference type="InterPro" id="IPR035100">
    <property type="entry name" value="TF_IIS-typ"/>
</dbReference>
<dbReference type="InterPro" id="IPR003617">
    <property type="entry name" value="TFIIS/CRSP70_N_sub"/>
</dbReference>
<dbReference type="InterPro" id="IPR035441">
    <property type="entry name" value="TFIIS/LEDGF_dom_sf"/>
</dbReference>
<dbReference type="InterPro" id="IPR003618">
    <property type="entry name" value="TFIIS_cen_dom"/>
</dbReference>
<dbReference type="InterPro" id="IPR036575">
    <property type="entry name" value="TFIIS_cen_dom_sf"/>
</dbReference>
<dbReference type="InterPro" id="IPR017923">
    <property type="entry name" value="TFIIS_N"/>
</dbReference>
<dbReference type="InterPro" id="IPR006289">
    <property type="entry name" value="TFSII"/>
</dbReference>
<dbReference type="InterPro" id="IPR001222">
    <property type="entry name" value="Znf_TFIIS"/>
</dbReference>
<dbReference type="NCBIfam" id="TIGR01385">
    <property type="entry name" value="TFSII"/>
    <property type="match status" value="1"/>
</dbReference>
<dbReference type="PANTHER" id="PTHR11477:SF4">
    <property type="entry name" value="TRANSCRIPTION ELONGATION FACTOR A PROTEIN 3"/>
    <property type="match status" value="1"/>
</dbReference>
<dbReference type="PANTHER" id="PTHR11477">
    <property type="entry name" value="TRANSCRIPTION FACTOR S-II ZINC FINGER DOMAIN-CONTAINING PROTEIN"/>
    <property type="match status" value="1"/>
</dbReference>
<dbReference type="Pfam" id="PF08711">
    <property type="entry name" value="Med26"/>
    <property type="match status" value="1"/>
</dbReference>
<dbReference type="Pfam" id="PF07500">
    <property type="entry name" value="TFIIS_M"/>
    <property type="match status" value="1"/>
</dbReference>
<dbReference type="Pfam" id="PF01096">
    <property type="entry name" value="Zn_ribbon_TFIIS"/>
    <property type="match status" value="1"/>
</dbReference>
<dbReference type="PIRSF" id="PIRSF006704">
    <property type="entry name" value="TF_IIS"/>
    <property type="match status" value="1"/>
</dbReference>
<dbReference type="SMART" id="SM00510">
    <property type="entry name" value="TFS2M"/>
    <property type="match status" value="1"/>
</dbReference>
<dbReference type="SMART" id="SM00509">
    <property type="entry name" value="TFS2N"/>
    <property type="match status" value="1"/>
</dbReference>
<dbReference type="SMART" id="SM00440">
    <property type="entry name" value="ZnF_C2C2"/>
    <property type="match status" value="1"/>
</dbReference>
<dbReference type="SUPFAM" id="SSF47676">
    <property type="entry name" value="Conserved domain common to transcription factors TFIIS, elongin A, CRSP70"/>
    <property type="match status" value="1"/>
</dbReference>
<dbReference type="SUPFAM" id="SSF46942">
    <property type="entry name" value="Elongation factor TFIIS domain 2"/>
    <property type="match status" value="1"/>
</dbReference>
<dbReference type="SUPFAM" id="SSF57783">
    <property type="entry name" value="Zinc beta-ribbon"/>
    <property type="match status" value="1"/>
</dbReference>
<dbReference type="PROSITE" id="PS51321">
    <property type="entry name" value="TFIIS_CENTRAL"/>
    <property type="match status" value="1"/>
</dbReference>
<dbReference type="PROSITE" id="PS51319">
    <property type="entry name" value="TFIIS_N"/>
    <property type="match status" value="1"/>
</dbReference>
<dbReference type="PROSITE" id="PS00466">
    <property type="entry name" value="ZF_TFIIS_1"/>
    <property type="match status" value="1"/>
</dbReference>
<dbReference type="PROSITE" id="PS51133">
    <property type="entry name" value="ZF_TFIIS_2"/>
    <property type="match status" value="1"/>
</dbReference>
<proteinExistence type="evidence at protein level"/>
<reference key="1">
    <citation type="journal article" date="1991" name="J. Biochem.">
        <title>Heterogeneity and tissue-specific expression of eukaryotic transcription factor S-II-related protein mRNA.</title>
        <authorList>
            <person name="Kanai A."/>
            <person name="Kuzuhara T."/>
            <person name="Sekimizu K."/>
            <person name="Natori S."/>
        </authorList>
    </citation>
    <scope>NUCLEOTIDE SEQUENCE [MRNA]</scope>
    <source>
        <tissue>Liver</tissue>
    </source>
</reference>
<reference key="2">
    <citation type="submission" date="1998-05" db="EMBL/GenBank/DDBJ databases">
        <authorList>
            <person name="Hirashima S."/>
            <person name="Hirai H."/>
            <person name="Nakanishi Y."/>
            <person name="Natori S."/>
        </authorList>
    </citation>
    <scope>NUCLEOTIDE SEQUENCE [MRNA]</scope>
</reference>
<reference key="3">
    <citation type="journal article" date="1998" name="Genomics">
        <title>Identification of novel genes encoding transcription elongation factor TFIIS (TCEA) in vertebrates: conservation of three distinct TFIIS isoforms in frog, mouse, and human.</title>
        <authorList>
            <person name="Labhart P."/>
            <person name="Morgan G.T."/>
        </authorList>
    </citation>
    <scope>NUCLEOTIDE SEQUENCE [MRNA]</scope>
    <source>
        <tissue>Fetus</tissue>
    </source>
</reference>
<reference key="4">
    <citation type="journal article" date="2005" name="Science">
        <title>The transcriptional landscape of the mammalian genome.</title>
        <authorList>
            <person name="Carninci P."/>
            <person name="Kasukawa T."/>
            <person name="Katayama S."/>
            <person name="Gough J."/>
            <person name="Frith M.C."/>
            <person name="Maeda N."/>
            <person name="Oyama R."/>
            <person name="Ravasi T."/>
            <person name="Lenhard B."/>
            <person name="Wells C."/>
            <person name="Kodzius R."/>
            <person name="Shimokawa K."/>
            <person name="Bajic V.B."/>
            <person name="Brenner S.E."/>
            <person name="Batalov S."/>
            <person name="Forrest A.R."/>
            <person name="Zavolan M."/>
            <person name="Davis M.J."/>
            <person name="Wilming L.G."/>
            <person name="Aidinis V."/>
            <person name="Allen J.E."/>
            <person name="Ambesi-Impiombato A."/>
            <person name="Apweiler R."/>
            <person name="Aturaliya R.N."/>
            <person name="Bailey T.L."/>
            <person name="Bansal M."/>
            <person name="Baxter L."/>
            <person name="Beisel K.W."/>
            <person name="Bersano T."/>
            <person name="Bono H."/>
            <person name="Chalk A.M."/>
            <person name="Chiu K.P."/>
            <person name="Choudhary V."/>
            <person name="Christoffels A."/>
            <person name="Clutterbuck D.R."/>
            <person name="Crowe M.L."/>
            <person name="Dalla E."/>
            <person name="Dalrymple B.P."/>
            <person name="de Bono B."/>
            <person name="Della Gatta G."/>
            <person name="di Bernardo D."/>
            <person name="Down T."/>
            <person name="Engstrom P."/>
            <person name="Fagiolini M."/>
            <person name="Faulkner G."/>
            <person name="Fletcher C.F."/>
            <person name="Fukushima T."/>
            <person name="Furuno M."/>
            <person name="Futaki S."/>
            <person name="Gariboldi M."/>
            <person name="Georgii-Hemming P."/>
            <person name="Gingeras T.R."/>
            <person name="Gojobori T."/>
            <person name="Green R.E."/>
            <person name="Gustincich S."/>
            <person name="Harbers M."/>
            <person name="Hayashi Y."/>
            <person name="Hensch T.K."/>
            <person name="Hirokawa N."/>
            <person name="Hill D."/>
            <person name="Huminiecki L."/>
            <person name="Iacono M."/>
            <person name="Ikeo K."/>
            <person name="Iwama A."/>
            <person name="Ishikawa T."/>
            <person name="Jakt M."/>
            <person name="Kanapin A."/>
            <person name="Katoh M."/>
            <person name="Kawasawa Y."/>
            <person name="Kelso J."/>
            <person name="Kitamura H."/>
            <person name="Kitano H."/>
            <person name="Kollias G."/>
            <person name="Krishnan S.P."/>
            <person name="Kruger A."/>
            <person name="Kummerfeld S.K."/>
            <person name="Kurochkin I.V."/>
            <person name="Lareau L.F."/>
            <person name="Lazarevic D."/>
            <person name="Lipovich L."/>
            <person name="Liu J."/>
            <person name="Liuni S."/>
            <person name="McWilliam S."/>
            <person name="Madan Babu M."/>
            <person name="Madera M."/>
            <person name="Marchionni L."/>
            <person name="Matsuda H."/>
            <person name="Matsuzawa S."/>
            <person name="Miki H."/>
            <person name="Mignone F."/>
            <person name="Miyake S."/>
            <person name="Morris K."/>
            <person name="Mottagui-Tabar S."/>
            <person name="Mulder N."/>
            <person name="Nakano N."/>
            <person name="Nakauchi H."/>
            <person name="Ng P."/>
            <person name="Nilsson R."/>
            <person name="Nishiguchi S."/>
            <person name="Nishikawa S."/>
            <person name="Nori F."/>
            <person name="Ohara O."/>
            <person name="Okazaki Y."/>
            <person name="Orlando V."/>
            <person name="Pang K.C."/>
            <person name="Pavan W.J."/>
            <person name="Pavesi G."/>
            <person name="Pesole G."/>
            <person name="Petrovsky N."/>
            <person name="Piazza S."/>
            <person name="Reed J."/>
            <person name="Reid J.F."/>
            <person name="Ring B.Z."/>
            <person name="Ringwald M."/>
            <person name="Rost B."/>
            <person name="Ruan Y."/>
            <person name="Salzberg S.L."/>
            <person name="Sandelin A."/>
            <person name="Schneider C."/>
            <person name="Schoenbach C."/>
            <person name="Sekiguchi K."/>
            <person name="Semple C.A."/>
            <person name="Seno S."/>
            <person name="Sessa L."/>
            <person name="Sheng Y."/>
            <person name="Shibata Y."/>
            <person name="Shimada H."/>
            <person name="Shimada K."/>
            <person name="Silva D."/>
            <person name="Sinclair B."/>
            <person name="Sperling S."/>
            <person name="Stupka E."/>
            <person name="Sugiura K."/>
            <person name="Sultana R."/>
            <person name="Takenaka Y."/>
            <person name="Taki K."/>
            <person name="Tammoja K."/>
            <person name="Tan S.L."/>
            <person name="Tang S."/>
            <person name="Taylor M.S."/>
            <person name="Tegner J."/>
            <person name="Teichmann S.A."/>
            <person name="Ueda H.R."/>
            <person name="van Nimwegen E."/>
            <person name="Verardo R."/>
            <person name="Wei C.L."/>
            <person name="Yagi K."/>
            <person name="Yamanishi H."/>
            <person name="Zabarovsky E."/>
            <person name="Zhu S."/>
            <person name="Zimmer A."/>
            <person name="Hide W."/>
            <person name="Bult C."/>
            <person name="Grimmond S.M."/>
            <person name="Teasdale R.D."/>
            <person name="Liu E.T."/>
            <person name="Brusic V."/>
            <person name="Quackenbush J."/>
            <person name="Wahlestedt C."/>
            <person name="Mattick J.S."/>
            <person name="Hume D.A."/>
            <person name="Kai C."/>
            <person name="Sasaki D."/>
            <person name="Tomaru Y."/>
            <person name="Fukuda S."/>
            <person name="Kanamori-Katayama M."/>
            <person name="Suzuki M."/>
            <person name="Aoki J."/>
            <person name="Arakawa T."/>
            <person name="Iida J."/>
            <person name="Imamura K."/>
            <person name="Itoh M."/>
            <person name="Kato T."/>
            <person name="Kawaji H."/>
            <person name="Kawagashira N."/>
            <person name="Kawashima T."/>
            <person name="Kojima M."/>
            <person name="Kondo S."/>
            <person name="Konno H."/>
            <person name="Nakano K."/>
            <person name="Ninomiya N."/>
            <person name="Nishio T."/>
            <person name="Okada M."/>
            <person name="Plessy C."/>
            <person name="Shibata K."/>
            <person name="Shiraki T."/>
            <person name="Suzuki S."/>
            <person name="Tagami M."/>
            <person name="Waki K."/>
            <person name="Watahiki A."/>
            <person name="Okamura-Oho Y."/>
            <person name="Suzuki H."/>
            <person name="Kawai J."/>
            <person name="Hayashizaki Y."/>
        </authorList>
    </citation>
    <scope>NUCLEOTIDE SEQUENCE [LARGE SCALE MRNA]</scope>
    <source>
        <strain>C57BL/6J</strain>
        <tissue>Kidney</tissue>
        <tissue>Pancreas</tissue>
    </source>
</reference>
<reference key="5">
    <citation type="journal article" date="2009" name="PLoS Biol.">
        <title>Lineage-specific biology revealed by a finished genome assembly of the mouse.</title>
        <authorList>
            <person name="Church D.M."/>
            <person name="Goodstadt L."/>
            <person name="Hillier L.W."/>
            <person name="Zody M.C."/>
            <person name="Goldstein S."/>
            <person name="She X."/>
            <person name="Bult C.J."/>
            <person name="Agarwala R."/>
            <person name="Cherry J.L."/>
            <person name="DiCuccio M."/>
            <person name="Hlavina W."/>
            <person name="Kapustin Y."/>
            <person name="Meric P."/>
            <person name="Maglott D."/>
            <person name="Birtle Z."/>
            <person name="Marques A.C."/>
            <person name="Graves T."/>
            <person name="Zhou S."/>
            <person name="Teague B."/>
            <person name="Potamousis K."/>
            <person name="Churas C."/>
            <person name="Place M."/>
            <person name="Herschleb J."/>
            <person name="Runnheim R."/>
            <person name="Forrest D."/>
            <person name="Amos-Landgraf J."/>
            <person name="Schwartz D.C."/>
            <person name="Cheng Z."/>
            <person name="Lindblad-Toh K."/>
            <person name="Eichler E.E."/>
            <person name="Ponting C.P."/>
        </authorList>
    </citation>
    <scope>NUCLEOTIDE SEQUENCE [LARGE SCALE GENOMIC DNA]</scope>
    <source>
        <strain>C57BL/6J</strain>
    </source>
</reference>
<reference key="6">
    <citation type="journal article" date="2004" name="Genome Res.">
        <title>The status, quality, and expansion of the NIH full-length cDNA project: the Mammalian Gene Collection (MGC).</title>
        <authorList>
            <consortium name="The MGC Project Team"/>
        </authorList>
    </citation>
    <scope>NUCLEOTIDE SEQUENCE [LARGE SCALE MRNA]</scope>
    <source>
        <tissue>Kidney</tissue>
    </source>
</reference>
<reference key="7">
    <citation type="journal article" date="2010" name="Cell">
        <title>A tissue-specific atlas of mouse protein phosphorylation and expression.</title>
        <authorList>
            <person name="Huttlin E.L."/>
            <person name="Jedrychowski M.P."/>
            <person name="Elias J.E."/>
            <person name="Goswami T."/>
            <person name="Rad R."/>
            <person name="Beausoleil S.A."/>
            <person name="Villen J."/>
            <person name="Haas W."/>
            <person name="Sowa M.E."/>
            <person name="Gygi S.P."/>
        </authorList>
    </citation>
    <scope>PHOSPHORYLATION [LARGE SCALE ANALYSIS] AT SER-113</scope>
    <scope>IDENTIFICATION BY MASS SPECTROMETRY [LARGE SCALE ANALYSIS]</scope>
    <source>
        <tissue>Kidney</tissue>
        <tissue>Pancreas</tissue>
    </source>
</reference>
<reference key="8">
    <citation type="submission" date="2004-11" db="PDB data bank">
        <title>Solution structure of the N-terminal domain I of mouse transcription elongation factor S-II protein 3.</title>
        <authorList>
            <consortium name="RIKEN structural genomics initiative (RSGI)"/>
        </authorList>
    </citation>
    <scope>STRUCTURE BY NMR OF 1-90</scope>
</reference>
<keyword id="KW-0002">3D-structure</keyword>
<keyword id="KW-0238">DNA-binding</keyword>
<keyword id="KW-0479">Metal-binding</keyword>
<keyword id="KW-0539">Nucleus</keyword>
<keyword id="KW-0597">Phosphoprotein</keyword>
<keyword id="KW-1185">Reference proteome</keyword>
<keyword id="KW-0804">Transcription</keyword>
<keyword id="KW-0805">Transcription regulation</keyword>
<keyword id="KW-0862">Zinc</keyword>
<keyword id="KW-0863">Zinc-finger</keyword>
<protein>
    <recommendedName>
        <fullName>Transcription elongation factor A protein 3</fullName>
    </recommendedName>
    <alternativeName>
        <fullName>Transcription elongation factor S-II protein 3</fullName>
    </alternativeName>
    <alternativeName>
        <fullName>Transcription elongation factor TFIIS.h</fullName>
    </alternativeName>
</protein>
<feature type="chain" id="PRO_0000121453" description="Transcription elongation factor A protein 3">
    <location>
        <begin position="1"/>
        <end position="347"/>
    </location>
</feature>
<feature type="domain" description="TFIIS N-terminal" evidence="3">
    <location>
        <begin position="5"/>
        <end position="82"/>
    </location>
</feature>
<feature type="domain" description="TFIIS central" evidence="4">
    <location>
        <begin position="186"/>
        <end position="302"/>
    </location>
</feature>
<feature type="zinc finger region" description="TFIIS-type" evidence="2">
    <location>
        <begin position="305"/>
        <end position="345"/>
    </location>
</feature>
<feature type="region of interest" description="Disordered" evidence="5">
    <location>
        <begin position="83"/>
        <end position="168"/>
    </location>
</feature>
<feature type="compositionally biased region" description="Basic and acidic residues" evidence="5">
    <location>
        <begin position="83"/>
        <end position="100"/>
    </location>
</feature>
<feature type="compositionally biased region" description="Basic and acidic residues" evidence="5">
    <location>
        <begin position="119"/>
        <end position="131"/>
    </location>
</feature>
<feature type="compositionally biased region" description="Low complexity" evidence="5">
    <location>
        <begin position="132"/>
        <end position="142"/>
    </location>
</feature>
<feature type="compositionally biased region" description="Low complexity" evidence="5">
    <location>
        <begin position="157"/>
        <end position="168"/>
    </location>
</feature>
<feature type="binding site" evidence="2">
    <location>
        <position position="309"/>
    </location>
    <ligand>
        <name>Zn(2+)</name>
        <dbReference type="ChEBI" id="CHEBI:29105"/>
    </ligand>
</feature>
<feature type="binding site" evidence="2">
    <location>
        <position position="312"/>
    </location>
    <ligand>
        <name>Zn(2+)</name>
        <dbReference type="ChEBI" id="CHEBI:29105"/>
    </ligand>
</feature>
<feature type="binding site" evidence="2">
    <location>
        <position position="337"/>
    </location>
    <ligand>
        <name>Zn(2+)</name>
        <dbReference type="ChEBI" id="CHEBI:29105"/>
    </ligand>
</feature>
<feature type="binding site" evidence="2">
    <location>
        <position position="340"/>
    </location>
    <ligand>
        <name>Zn(2+)</name>
        <dbReference type="ChEBI" id="CHEBI:29105"/>
    </ligand>
</feature>
<feature type="modified residue" description="Phosphoserine" evidence="7">
    <location>
        <position position="113"/>
    </location>
</feature>
<feature type="modified residue" description="Phosphoserine" evidence="1">
    <location>
        <position position="139"/>
    </location>
</feature>
<feature type="sequence conflict" description="In Ref. 4; BAB25037." evidence="6" ref="4">
    <original>L</original>
    <variation>P</variation>
    <location>
        <position position="7"/>
    </location>
</feature>
<feature type="sequence conflict" description="In Ref. 4; BAB25037." evidence="6" ref="4">
    <original>EV</original>
    <variation>VL</variation>
    <location>
        <begin position="63"/>
        <end position="64"/>
    </location>
</feature>
<feature type="sequence conflict" description="In Ref. 4; BAB25037." evidence="6" ref="4">
    <original>KKEK</original>
    <variation>RREE</variation>
    <location>
        <begin position="96"/>
        <end position="99"/>
    </location>
</feature>
<feature type="helix" evidence="8">
    <location>
        <begin position="4"/>
        <end position="19"/>
    </location>
</feature>
<feature type="helix" evidence="8">
    <location>
        <begin position="26"/>
        <end position="34"/>
    </location>
</feature>
<feature type="helix" evidence="8">
    <location>
        <begin position="40"/>
        <end position="45"/>
    </location>
</feature>
<feature type="helix" evidence="8">
    <location>
        <begin position="48"/>
        <end position="58"/>
    </location>
</feature>
<feature type="helix" evidence="8">
    <location>
        <begin position="63"/>
        <end position="78"/>
    </location>
</feature>
<evidence type="ECO:0000250" key="1">
    <source>
        <dbReference type="UniProtKB" id="O75764"/>
    </source>
</evidence>
<evidence type="ECO:0000255" key="2">
    <source>
        <dbReference type="PROSITE-ProRule" id="PRU00472"/>
    </source>
</evidence>
<evidence type="ECO:0000255" key="3">
    <source>
        <dbReference type="PROSITE-ProRule" id="PRU00649"/>
    </source>
</evidence>
<evidence type="ECO:0000255" key="4">
    <source>
        <dbReference type="PROSITE-ProRule" id="PRU00651"/>
    </source>
</evidence>
<evidence type="ECO:0000256" key="5">
    <source>
        <dbReference type="SAM" id="MobiDB-lite"/>
    </source>
</evidence>
<evidence type="ECO:0000305" key="6"/>
<evidence type="ECO:0007744" key="7">
    <source>
    </source>
</evidence>
<evidence type="ECO:0007829" key="8">
    <source>
        <dbReference type="PDB" id="1WJT"/>
    </source>
</evidence>
<name>TCEA3_MOUSE</name>
<organism>
    <name type="scientific">Mus musculus</name>
    <name type="common">Mouse</name>
    <dbReference type="NCBI Taxonomy" id="10090"/>
    <lineage>
        <taxon>Eukaryota</taxon>
        <taxon>Metazoa</taxon>
        <taxon>Chordata</taxon>
        <taxon>Craniata</taxon>
        <taxon>Vertebrata</taxon>
        <taxon>Euteleostomi</taxon>
        <taxon>Mammalia</taxon>
        <taxon>Eutheria</taxon>
        <taxon>Euarchontoglires</taxon>
        <taxon>Glires</taxon>
        <taxon>Rodentia</taxon>
        <taxon>Myomorpha</taxon>
        <taxon>Muroidea</taxon>
        <taxon>Muridae</taxon>
        <taxon>Murinae</taxon>
        <taxon>Mus</taxon>
        <taxon>Mus</taxon>
    </lineage>
</organism>
<gene>
    <name type="primary">Tcea3</name>
    <name type="synonym">Tfiish</name>
</gene>
<sequence>MGLEEELLRIAKKLEKMVSRKKTEGALDLLKKLNSCQMSIQLLQTTRIGVAVNGVRKHCSDKEVVSLAKVLIKNWKRLLDSPRTTKGEREEREKAKKEKGLGCSDWKPEAGLSPPRKKGGGEPKTRRDSVDSRSSTTSSPKRPSLERSNSSKSKVETPTTPSSPSTPTFAPAVCLLAPCYLTGDSVRDKCVEMLSAALKAEDNFKDYGVNCDKLASEIEDHIYQELKSTDMKYRNRVRSRISNLKDPRNPGLRRNVLSGAISPELIAKMTAEEMASDELRELRNAMTQEAIREHQMAKTGGTTTDLLRCSKCKKKNCTYNQVQTRSADEPMTTFVLCNECGNRWKFC</sequence>
<comment type="function">
    <text>Necessary for efficient RNA polymerase II transcription elongation past template-encoded arresting sites. The arresting sites in DNA have the property of trapping a certain fraction of elongating RNA polymerases that pass through, resulting in locked ternary complexes. Cleavage of the nascent transcript by S-II allows the resumption of elongation from the new 3'-terminus.</text>
</comment>
<comment type="subcellular location">
    <subcellularLocation>
        <location evidence="6">Nucleus</location>
    </subcellularLocation>
</comment>
<comment type="tissue specificity">
    <text>Liver, kidney and heart.</text>
</comment>
<comment type="similarity">
    <text evidence="6">Belongs to the TFS-II family.</text>
</comment>
<comment type="sequence caution" evidence="6">
    <conflict type="miscellaneous discrepancy">
        <sequence resource="EMBL-CDS" id="BAA28177"/>
    </conflict>
    <text>Chimeric cDNA. The sequence from position 1 to 95 is due to a chimeric cDNA.</text>
</comment>
<comment type="sequence caution" evidence="6">
    <conflict type="erroneous translation">
        <sequence resource="EMBL-CDS" id="BAB31514"/>
    </conflict>
    <text>Wrong choice of frame.</text>
</comment>